<accession>P07339</accession>
<accession>Q6IB57</accession>
<name>CATD_HUMAN</name>
<gene>
    <name type="primary">CTSD</name>
    <name type="synonym">CPSD</name>
</gene>
<protein>
    <recommendedName>
        <fullName>Cathepsin D</fullName>
        <ecNumber>3.4.23.5</ecNumber>
    </recommendedName>
    <component>
        <recommendedName>
            <fullName>Cathepsin D light chain</fullName>
        </recommendedName>
    </component>
    <component>
        <recommendedName>
            <fullName>Cathepsin D heavy chain</fullName>
        </recommendedName>
    </component>
</protein>
<proteinExistence type="evidence at protein level"/>
<organism>
    <name type="scientific">Homo sapiens</name>
    <name type="common">Human</name>
    <dbReference type="NCBI Taxonomy" id="9606"/>
    <lineage>
        <taxon>Eukaryota</taxon>
        <taxon>Metazoa</taxon>
        <taxon>Chordata</taxon>
        <taxon>Craniata</taxon>
        <taxon>Vertebrata</taxon>
        <taxon>Euteleostomi</taxon>
        <taxon>Mammalia</taxon>
        <taxon>Eutheria</taxon>
        <taxon>Euarchontoglires</taxon>
        <taxon>Primates</taxon>
        <taxon>Haplorrhini</taxon>
        <taxon>Catarrhini</taxon>
        <taxon>Hominidae</taxon>
        <taxon>Homo</taxon>
    </lineage>
</organism>
<sequence length="412" mass="44552">MQPSSLLPLALCLLAAPASALVRIPLHKFTSIRRTMSEVGGSVEDLIAKGPVSKYSQAVPAVTEGPIPEVLKNYMDAQYYGEIGIGTPPQCFTVVFDTGSSNLWVPSIHCKLLDIACWIHHKYNSDKSSTYVKNGTSFDIHYGSGSLSGYLSQDTVSVPCQSASSASALGGVKVERQVFGEATKQPGITFIAAKFDGILGMAYPRISVNNVLPVFDNLMQQKLVDQNIFSFYLSRDPDAQPGGELMLGGTDSKYYKGSLSYLNVTRKAYWQVHLDQVEVASGLTLCKEGCEAIVDTGTSLMVGPVDEVRELQKAIGAVPLIQGEYMIPCEKVSTLPAITLKLGGKGYKLSPEDYTLKVSQAGKTLCLSGFMGMDIPPPSGPLWILGDVFIGRYYTVFDRDNNRVGFAEAARL</sequence>
<keyword id="KW-0002">3D-structure</keyword>
<keyword id="KW-0026">Alzheimer disease</keyword>
<keyword id="KW-0064">Aspartyl protease</keyword>
<keyword id="KW-0903">Direct protein sequencing</keyword>
<keyword id="KW-0225">Disease variant</keyword>
<keyword id="KW-1015">Disulfide bond</keyword>
<keyword id="KW-0325">Glycoprotein</keyword>
<keyword id="KW-0378">Hydrolase</keyword>
<keyword id="KW-0458">Lysosome</keyword>
<keyword id="KW-0523">Neurodegeneration</keyword>
<keyword id="KW-0525">Neuronal ceroid lipofuscinosis</keyword>
<keyword id="KW-0645">Protease</keyword>
<keyword id="KW-1267">Proteomics identification</keyword>
<keyword id="KW-1185">Reference proteome</keyword>
<keyword id="KW-0964">Secreted</keyword>
<keyword id="KW-0732">Signal</keyword>
<keyword id="KW-0865">Zymogen</keyword>
<comment type="function">
    <text evidence="16">Acid protease active in intracellular protein breakdown. Plays a role in APP processing following cleavage and activation by ADAM30 which leads to APP degradation (PubMed:27333034). Involved in the pathogenesis of several diseases such as breast cancer and possibly Alzheimer disease.</text>
</comment>
<comment type="catalytic activity">
    <reaction>
        <text>Specificity similar to, but narrower than, that of pepsin A. Does not cleave the 4-Gln-|-His-5 bond in B chain of insulin.</text>
        <dbReference type="EC" id="3.4.23.5"/>
    </reaction>
</comment>
<comment type="subunit">
    <text evidence="1 7 16 17">Consists of a light chain and a heavy chain (PubMed:1426530, PubMed:8393577). Interacts with ADAM30; this leads to activation of CTSD (PubMed:27333034). Interacts with GRN; stabilizes CTSD; increases its proteolytic activity (By similarity).</text>
</comment>
<comment type="interaction">
    <interactant intactId="EBI-2115097">
        <id>P07339</id>
    </interactant>
    <interactant intactId="EBI-77613">
        <id>P05067</id>
        <label>APP</label>
    </interactant>
    <organismsDiffer>false</organismsDiffer>
    <experiments>2</experiments>
</comment>
<comment type="interaction">
    <interactant intactId="EBI-2115097">
        <id>P07339</id>
    </interactant>
    <interactant intactId="EBI-12019838">
        <id>Q9P1A6-3</id>
        <label>DLGAP2</label>
    </interactant>
    <organismsDiffer>false</organismsDiffer>
    <experiments>3</experiments>
</comment>
<comment type="interaction">
    <interactant intactId="EBI-2115097">
        <id>P07339</id>
    </interactant>
    <interactant intactId="EBI-12866582">
        <id>I6L9I8</id>
        <label>EPN3</label>
    </interactant>
    <organismsDiffer>false</organismsDiffer>
    <experiments>3</experiments>
</comment>
<comment type="interaction">
    <interactant intactId="EBI-2115097">
        <id>P07339</id>
    </interactant>
    <interactant intactId="EBI-3940939">
        <id>Q9H6S3</id>
        <label>EPS8L2</label>
    </interactant>
    <organismsDiffer>false</organismsDiffer>
    <experiments>3</experiments>
</comment>
<comment type="interaction">
    <interactant intactId="EBI-2115097">
        <id>P07339</id>
    </interactant>
    <interactant intactId="EBI-21649723">
        <id>Q7Z602</id>
        <label>GPR141</label>
    </interactant>
    <organismsDiffer>false</organismsDiffer>
    <experiments>3</experiments>
</comment>
<comment type="interaction">
    <interactant intactId="EBI-2115097">
        <id>P07339</id>
    </interactant>
    <interactant intactId="EBI-747754">
        <id>P28799</id>
        <label>GRN</label>
    </interactant>
    <organismsDiffer>false</organismsDiffer>
    <experiments>4</experiments>
</comment>
<comment type="interaction">
    <interactant intactId="EBI-2115097">
        <id>P07339</id>
    </interactant>
    <interactant intactId="EBI-21335602">
        <id>PRO_0000012695</id>
        <label>GRN</label>
        <dbReference type="UniProtKB" id="P28799"/>
    </interactant>
    <organismsDiffer>false</organismsDiffer>
    <experiments>2</experiments>
</comment>
<comment type="interaction">
    <interactant intactId="EBI-2115097">
        <id>P07339</id>
    </interactant>
    <interactant intactId="EBI-21335615">
        <id>PRO_0000012696</id>
        <label>GRN</label>
        <dbReference type="UniProtKB" id="P28799"/>
    </interactant>
    <organismsDiffer>false</organismsDiffer>
    <experiments>2</experiments>
</comment>
<comment type="interaction">
    <interactant intactId="EBI-2115097">
        <id>P07339</id>
    </interactant>
    <interactant intactId="EBI-21335629">
        <id>PRO_0000012697</id>
        <label>GRN</label>
        <dbReference type="UniProtKB" id="P28799"/>
    </interactant>
    <organismsDiffer>false</organismsDiffer>
    <experiments>2</experiments>
</comment>
<comment type="interaction">
    <interactant intactId="EBI-2115097">
        <id>P07339</id>
    </interactant>
    <interactant intactId="EBI-21335642">
        <id>PRO_0000012698</id>
        <label>GRN</label>
        <dbReference type="UniProtKB" id="P28799"/>
    </interactant>
    <organismsDiffer>false</organismsDiffer>
    <experiments>2</experiments>
</comment>
<comment type="interaction">
    <interactant intactId="EBI-2115097">
        <id>P07339</id>
    </interactant>
    <interactant intactId="EBI-21335656">
        <id>PRO_0000012699</id>
        <label>GRN</label>
        <dbReference type="UniProtKB" id="P28799"/>
    </interactant>
    <organismsDiffer>false</organismsDiffer>
    <experiments>2</experiments>
</comment>
<comment type="interaction">
    <interactant intactId="EBI-2115097">
        <id>P07339</id>
    </interactant>
    <interactant intactId="EBI-21335669">
        <id>PRO_0000012700</id>
        <label>GRN</label>
        <dbReference type="UniProtKB" id="P28799"/>
    </interactant>
    <organismsDiffer>false</organismsDiffer>
    <experiments>2</experiments>
</comment>
<comment type="interaction">
    <interactant intactId="EBI-2115097">
        <id>P07339</id>
    </interactant>
    <interactant intactId="EBI-21335682">
        <id>PRO_0000012701</id>
        <label>GRN</label>
        <dbReference type="UniProtKB" id="P28799"/>
    </interactant>
    <organismsDiffer>false</organismsDiffer>
    <experiments>2</experiments>
</comment>
<comment type="interaction">
    <interactant intactId="EBI-2115097">
        <id>P07339</id>
    </interactant>
    <interactant intactId="EBI-79722">
        <id>P68431</id>
        <label>H3C12</label>
    </interactant>
    <organismsDiffer>false</organismsDiffer>
    <experiments>3</experiments>
</comment>
<comment type="interaction">
    <interactant intactId="EBI-2115097">
        <id>P07339</id>
    </interactant>
    <interactant intactId="EBI-25840037">
        <id>Q9Y6F6-3</id>
        <label>IRAG1</label>
    </interactant>
    <organismsDiffer>false</organismsDiffer>
    <experiments>3</experiments>
</comment>
<comment type="interaction">
    <interactant intactId="EBI-2115097">
        <id>P07339</id>
    </interactant>
    <interactant intactId="EBI-2679809">
        <id>Q12756</id>
        <label>KIF1A</label>
    </interactant>
    <organismsDiffer>false</organismsDiffer>
    <experiments>3</experiments>
</comment>
<comment type="interaction">
    <interactant intactId="EBI-2115097">
        <id>P07339</id>
    </interactant>
    <interactant intactId="EBI-10246607">
        <id>Q5TA79</id>
        <label>LCE2A</label>
    </interactant>
    <organismsDiffer>false</organismsDiffer>
    <experiments>3</experiments>
</comment>
<comment type="interaction">
    <interactant intactId="EBI-2115097">
        <id>P07339</id>
    </interactant>
    <interactant intactId="EBI-25840143">
        <id>Q86VF5-3</id>
        <label>MOGAT3</label>
    </interactant>
    <organismsDiffer>false</organismsDiffer>
    <experiments>3</experiments>
</comment>
<comment type="interaction">
    <interactant intactId="EBI-2115097">
        <id>P07339</id>
    </interactant>
    <interactant intactId="EBI-25840002">
        <id>O15130-2</id>
        <label>NPFF</label>
    </interactant>
    <organismsDiffer>false</organismsDiffer>
    <experiments>3</experiments>
</comment>
<comment type="interaction">
    <interactant intactId="EBI-2115097">
        <id>P07339</id>
    </interactant>
    <interactant intactId="EBI-12339509">
        <id>Q96LB9</id>
        <label>PGLYRP3</label>
    </interactant>
    <organismsDiffer>false</organismsDiffer>
    <experiments>3</experiments>
</comment>
<comment type="interaction">
    <interactant intactId="EBI-2115097">
        <id>P07339</id>
    </interactant>
    <interactant intactId="EBI-10196507">
        <id>P09565</id>
        <label>PP9974</label>
    </interactant>
    <organismsDiffer>false</organismsDiffer>
    <experiments>3</experiments>
</comment>
<comment type="interaction">
    <interactant intactId="EBI-2115097">
        <id>P07339</id>
    </interactant>
    <interactant intactId="EBI-354861">
        <id>Q9C004</id>
        <label>SPRY4</label>
    </interactant>
    <organismsDiffer>false</organismsDiffer>
    <experiments>3</experiments>
</comment>
<comment type="interaction">
    <interactant intactId="EBI-2115097">
        <id>P07339</id>
    </interactant>
    <interactant intactId="EBI-723091">
        <id>Q8NBJ7</id>
        <label>SUMF2</label>
    </interactant>
    <organismsDiffer>false</organismsDiffer>
    <experiments>3</experiments>
</comment>
<comment type="interaction">
    <interactant intactId="EBI-2115097">
        <id>P07339</id>
    </interactant>
    <interactant intactId="EBI-17284568">
        <id>Q9BQG1</id>
        <label>SYT3</label>
    </interactant>
    <organismsDiffer>false</organismsDiffer>
    <experiments>3</experiments>
</comment>
<comment type="interaction">
    <interactant intactId="EBI-2115097">
        <id>P07339</id>
    </interactant>
    <interactant intactId="EBI-12151837">
        <id>P28347-2</id>
        <label>TEAD1</label>
    </interactant>
    <organismsDiffer>false</organismsDiffer>
    <experiments>3</experiments>
</comment>
<comment type="interaction">
    <interactant intactId="EBI-2115097">
        <id>P07339</id>
    </interactant>
    <interactant intactId="EBI-354022">
        <id>P45880</id>
        <label>VDAC2</label>
    </interactant>
    <organismsDiffer>false</organismsDiffer>
    <experiments>3</experiments>
</comment>
<comment type="interaction">
    <interactant intactId="EBI-2115097">
        <id>P07339</id>
    </interactant>
    <interactant intactId="EBI-25840023">
        <id>Q15007-2</id>
        <label>WTAP</label>
    </interactant>
    <organismsDiffer>false</organismsDiffer>
    <experiments>3</experiments>
</comment>
<comment type="interaction">
    <interactant intactId="EBI-2115097">
        <id>P07339</id>
    </interactant>
    <interactant intactId="EBI-743923">
        <id>O00308</id>
        <label>WWP2</label>
    </interactant>
    <organismsDiffer>false</organismsDiffer>
    <experiments>3</experiments>
</comment>
<comment type="interaction">
    <interactant intactId="EBI-2115097">
        <id>P07339</id>
    </interactant>
    <interactant intactId="EBI-25840130">
        <id>Q5W0Z9-4</id>
        <label>ZDHHC20</label>
    </interactant>
    <organismsDiffer>false</organismsDiffer>
    <experiments>3</experiments>
</comment>
<comment type="interaction">
    <interactant intactId="EBI-2115097">
        <id>P07339</id>
    </interactant>
    <interactant intactId="EBI-10486136">
        <id>Q6ZNH5</id>
        <label>ZNF497</label>
    </interactant>
    <organismsDiffer>false</organismsDiffer>
    <experiments>4</experiments>
</comment>
<comment type="subcellular location">
    <subcellularLocation>
        <location>Lysosome</location>
    </subcellularLocation>
    <subcellularLocation>
        <location>Melanosome</location>
    </subcellularLocation>
    <subcellularLocation>
        <location>Secreted</location>
        <location>Extracellular space</location>
    </subcellularLocation>
    <text evidence="13">Identified by mass spectrometry in melanosome fractions from stage I to stage IV. In aortic samples, detected as an extracellular protein loosely bound to the matrix (PubMed:20551380).</text>
</comment>
<comment type="tissue specificity">
    <text evidence="7 13">Expressed in the aorta extracellular space (at protein level) (PubMed:20551380). Expressed in liver (at protein level) (PubMed:1426530).</text>
</comment>
<comment type="PTM">
    <text evidence="6 8 9 12 15">N- and O-glycosylated.</text>
</comment>
<comment type="PTM">
    <text evidence="16">Undergoes proteolytic cleavage and activation by ADAM30.</text>
</comment>
<comment type="PTM">
    <text evidence="7 16">As well as the major heavy chain which starts at Leu-169, 2 minor forms starting at Gly-170 and Gly-171 have been identified (PubMed:1426530). An additional form starting at Ala-168 has also been identified (PubMed:27333034).</text>
</comment>
<comment type="polymorphism">
    <text>The Val-58 allele is significantly overrepresented in demented patients (11.8%) compared with non-demented controls (4.9%). Carriers of the Val-58 allele have a 3.1-fold increased risk for developing AD than non-carriers.</text>
</comment>
<comment type="disease" evidence="10 11 14">
    <disease id="DI-00818">
        <name>Ceroid lipofuscinosis, neuronal, 10</name>
        <acronym>CLN10</acronym>
        <description>A form of neuronal ceroid lipofuscinosis with onset at birth or early childhood. Neuronal ceroid lipofuscinoses are progressive neurodegenerative, lysosomal storage diseases characterized by intracellular accumulation of autofluorescent liposomal material, and clinically by seizures, dementia, visual loss, and/or cerebral atrophy.</description>
        <dbReference type="MIM" id="610127"/>
    </disease>
    <text>The disease is caused by variants affecting the gene represented in this entry.</text>
</comment>
<comment type="similarity">
    <text evidence="18">Belongs to the peptidase A1 family.</text>
</comment>
<comment type="online information" name="NCL CTSD">
    <link uri="https://www.ucl.ac.uk/ncl-disease/ncl-resource-gateway-batten-disease"/>
    <text>Neural Ceroid Lipofuscinoses mutation db</text>
</comment>
<evidence type="ECO:0000250" key="1">
    <source>
        <dbReference type="UniProtKB" id="P18242"/>
    </source>
</evidence>
<evidence type="ECO:0000255" key="2"/>
<evidence type="ECO:0000255" key="3">
    <source>
        <dbReference type="PROSITE-ProRule" id="PRU01103"/>
    </source>
</evidence>
<evidence type="ECO:0000255" key="4">
    <source>
        <dbReference type="PROSITE-ProRule" id="PRU10094"/>
    </source>
</evidence>
<evidence type="ECO:0000269" key="5">
    <source>
    </source>
</evidence>
<evidence type="ECO:0000269" key="6">
    <source>
    </source>
</evidence>
<evidence type="ECO:0000269" key="7">
    <source>
    </source>
</evidence>
<evidence type="ECO:0000269" key="8">
    <source>
    </source>
</evidence>
<evidence type="ECO:0000269" key="9">
    <source>
    </source>
</evidence>
<evidence type="ECO:0000269" key="10">
    <source>
    </source>
</evidence>
<evidence type="ECO:0000269" key="11">
    <source>
    </source>
</evidence>
<evidence type="ECO:0000269" key="12">
    <source>
    </source>
</evidence>
<evidence type="ECO:0000269" key="13">
    <source>
    </source>
</evidence>
<evidence type="ECO:0000269" key="14">
    <source>
    </source>
</evidence>
<evidence type="ECO:0000269" key="15">
    <source>
    </source>
</evidence>
<evidence type="ECO:0000269" key="16">
    <source>
    </source>
</evidence>
<evidence type="ECO:0000269" key="17">
    <source>
    </source>
</evidence>
<evidence type="ECO:0000305" key="18"/>
<evidence type="ECO:0000305" key="19">
    <source>
    </source>
</evidence>
<evidence type="ECO:0007829" key="20">
    <source>
        <dbReference type="PDB" id="1LYA"/>
    </source>
</evidence>
<evidence type="ECO:0007829" key="21">
    <source>
        <dbReference type="PDB" id="1LYW"/>
    </source>
</evidence>
<evidence type="ECO:0007829" key="22">
    <source>
        <dbReference type="PDB" id="4OD9"/>
    </source>
</evidence>
<feature type="signal peptide" evidence="2">
    <location>
        <begin position="1"/>
        <end position="20"/>
    </location>
</feature>
<feature type="propeptide" id="PRO_0000025949" description="Activation peptide">
    <location>
        <begin position="21"/>
        <end position="64"/>
    </location>
</feature>
<feature type="chain" id="PRO_0000025950" description="Cathepsin D">
    <location>
        <begin position="65"/>
        <end position="412"/>
    </location>
</feature>
<feature type="chain" id="PRO_0000025951" description="Cathepsin D light chain" evidence="19">
    <location>
        <begin position="65"/>
        <end position="162"/>
    </location>
</feature>
<feature type="chain" id="PRO_0000025952" description="Cathepsin D heavy chain" evidence="19">
    <location>
        <begin position="169"/>
        <end position="412"/>
    </location>
</feature>
<feature type="domain" description="Peptidase A1" evidence="3">
    <location>
        <begin position="79"/>
        <end position="407"/>
    </location>
</feature>
<feature type="active site" evidence="4 17">
    <location>
        <position position="97"/>
    </location>
</feature>
<feature type="active site" evidence="4 17">
    <location>
        <position position="295"/>
    </location>
</feature>
<feature type="glycosylation site" description="O-linked (GalNAc...) threonine" evidence="15">
    <location>
        <position position="63"/>
    </location>
</feature>
<feature type="glycosylation site" description="N-linked (GlcNAc...) asparagine" evidence="12">
    <location>
        <position position="134"/>
    </location>
</feature>
<feature type="glycosylation site" description="N-linked (GlcNAc...) asparagine" evidence="6 8 9 12 17">
    <location>
        <position position="263"/>
    </location>
</feature>
<feature type="disulfide bond" evidence="17">
    <location>
        <begin position="91"/>
        <end position="160"/>
    </location>
</feature>
<feature type="disulfide bond" evidence="17">
    <location>
        <begin position="110"/>
        <end position="117"/>
    </location>
</feature>
<feature type="disulfide bond" evidence="17">
    <location>
        <begin position="286"/>
        <end position="290"/>
    </location>
</feature>
<feature type="disulfide bond">
    <location>
        <begin position="329"/>
        <end position="366"/>
    </location>
</feature>
<feature type="sequence variant" id="VAR_011621" description="Associated with increased risk for AD; possibly influences secretion and intracellular maturation; dbSNP:rs17571." evidence="5">
    <original>A</original>
    <variation>V</variation>
    <location>
        <position position="58"/>
    </location>
</feature>
<feature type="sequence variant" id="VAR_029362" description="In CLN10; dbSNP:rs121912789." evidence="11 14">
    <original>F</original>
    <variation>I</variation>
    <location>
        <position position="229"/>
    </location>
</feature>
<feature type="sequence variant" id="VAR_058490" description="In dbSNP:rs147278302." evidence="10">
    <original>G</original>
    <variation>R</variation>
    <location>
        <position position="282"/>
    </location>
</feature>
<feature type="sequence variant" id="VAR_029363" description="In CLN10; dbSNP:rs121912790." evidence="11">
    <original>W</original>
    <variation>C</variation>
    <location>
        <position position="383"/>
    </location>
</feature>
<feature type="strand" evidence="22">
    <location>
        <begin position="67"/>
        <end position="74"/>
    </location>
</feature>
<feature type="turn" evidence="22">
    <location>
        <begin position="75"/>
        <end position="77"/>
    </location>
</feature>
<feature type="strand" evidence="22">
    <location>
        <begin position="78"/>
        <end position="85"/>
    </location>
</feature>
<feature type="turn" evidence="22">
    <location>
        <begin position="86"/>
        <end position="89"/>
    </location>
</feature>
<feature type="strand" evidence="22">
    <location>
        <begin position="90"/>
        <end position="97"/>
    </location>
</feature>
<feature type="strand" evidence="22">
    <location>
        <begin position="103"/>
        <end position="107"/>
    </location>
</feature>
<feature type="helix" evidence="22">
    <location>
        <begin position="115"/>
        <end position="118"/>
    </location>
</feature>
<feature type="helix" evidence="22">
    <location>
        <begin position="125"/>
        <end position="127"/>
    </location>
</feature>
<feature type="strand" evidence="22">
    <location>
        <begin position="132"/>
        <end position="141"/>
    </location>
</feature>
<feature type="strand" evidence="22">
    <location>
        <begin position="146"/>
        <end position="159"/>
    </location>
</feature>
<feature type="strand" evidence="22">
    <location>
        <begin position="172"/>
        <end position="184"/>
    </location>
</feature>
<feature type="helix" evidence="22">
    <location>
        <begin position="189"/>
        <end position="192"/>
    </location>
</feature>
<feature type="strand" evidence="22">
    <location>
        <begin position="194"/>
        <end position="200"/>
    </location>
</feature>
<feature type="helix" evidence="22">
    <location>
        <begin position="204"/>
        <end position="206"/>
    </location>
</feature>
<feature type="helix" evidence="22">
    <location>
        <begin position="208"/>
        <end position="210"/>
    </location>
</feature>
<feature type="helix" evidence="22">
    <location>
        <begin position="214"/>
        <end position="220"/>
    </location>
</feature>
<feature type="strand" evidence="22">
    <location>
        <begin position="224"/>
        <end position="226"/>
    </location>
</feature>
<feature type="strand" evidence="22">
    <location>
        <begin position="228"/>
        <end position="233"/>
    </location>
</feature>
<feature type="strand" evidence="21">
    <location>
        <begin position="236"/>
        <end position="238"/>
    </location>
</feature>
<feature type="strand" evidence="22">
    <location>
        <begin position="239"/>
        <end position="249"/>
    </location>
</feature>
<feature type="helix" evidence="22">
    <location>
        <begin position="252"/>
        <end position="254"/>
    </location>
</feature>
<feature type="strand" evidence="22">
    <location>
        <begin position="255"/>
        <end position="263"/>
    </location>
</feature>
<feature type="turn" evidence="22">
    <location>
        <begin position="267"/>
        <end position="270"/>
    </location>
</feature>
<feature type="strand" evidence="22">
    <location>
        <begin position="271"/>
        <end position="274"/>
    </location>
</feature>
<feature type="strand" evidence="22">
    <location>
        <begin position="276"/>
        <end position="279"/>
    </location>
</feature>
<feature type="turn" evidence="21">
    <location>
        <begin position="280"/>
        <end position="282"/>
    </location>
</feature>
<feature type="strand" evidence="22">
    <location>
        <begin position="284"/>
        <end position="286"/>
    </location>
</feature>
<feature type="strand" evidence="22">
    <location>
        <begin position="290"/>
        <end position="294"/>
    </location>
</feature>
<feature type="strand" evidence="22">
    <location>
        <begin position="299"/>
        <end position="303"/>
    </location>
</feature>
<feature type="helix" evidence="22">
    <location>
        <begin position="305"/>
        <end position="314"/>
    </location>
</feature>
<feature type="strand" evidence="20">
    <location>
        <begin position="318"/>
        <end position="321"/>
    </location>
</feature>
<feature type="strand" evidence="22">
    <location>
        <begin position="325"/>
        <end position="327"/>
    </location>
</feature>
<feature type="helix" evidence="22">
    <location>
        <begin position="329"/>
        <end position="334"/>
    </location>
</feature>
<feature type="strand" evidence="22">
    <location>
        <begin position="338"/>
        <end position="342"/>
    </location>
</feature>
<feature type="strand" evidence="22">
    <location>
        <begin position="345"/>
        <end position="349"/>
    </location>
</feature>
<feature type="helix" evidence="22">
    <location>
        <begin position="351"/>
        <end position="354"/>
    </location>
</feature>
<feature type="strand" evidence="22">
    <location>
        <begin position="355"/>
        <end position="360"/>
    </location>
</feature>
<feature type="strand" evidence="22">
    <location>
        <begin position="363"/>
        <end position="372"/>
    </location>
</feature>
<feature type="turn" evidence="22">
    <location>
        <begin position="377"/>
        <end position="379"/>
    </location>
</feature>
<feature type="strand" evidence="22">
    <location>
        <begin position="383"/>
        <end position="385"/>
    </location>
</feature>
<feature type="helix" evidence="22">
    <location>
        <begin position="387"/>
        <end position="392"/>
    </location>
</feature>
<feature type="strand" evidence="22">
    <location>
        <begin position="393"/>
        <end position="398"/>
    </location>
</feature>
<feature type="turn" evidence="22">
    <location>
        <begin position="399"/>
        <end position="402"/>
    </location>
</feature>
<feature type="strand" evidence="22">
    <location>
        <begin position="403"/>
        <end position="409"/>
    </location>
</feature>
<dbReference type="EC" id="3.4.23.5"/>
<dbReference type="EMBL" id="M11233">
    <property type="protein sequence ID" value="AAB59529.1"/>
    <property type="molecule type" value="mRNA"/>
</dbReference>
<dbReference type="EMBL" id="X05344">
    <property type="protein sequence ID" value="CAA28955.1"/>
    <property type="molecule type" value="mRNA"/>
</dbReference>
<dbReference type="EMBL" id="M63138">
    <property type="protein sequence ID" value="AAA51922.1"/>
    <property type="molecule type" value="Genomic_DNA"/>
</dbReference>
<dbReference type="EMBL" id="M63134">
    <property type="protein sequence ID" value="AAA51922.1"/>
    <property type="status" value="JOINED"/>
    <property type="molecule type" value="Genomic_DNA"/>
</dbReference>
<dbReference type="EMBL" id="M63135">
    <property type="protein sequence ID" value="AAA51922.1"/>
    <property type="status" value="JOINED"/>
    <property type="molecule type" value="Genomic_DNA"/>
</dbReference>
<dbReference type="EMBL" id="M63136">
    <property type="protein sequence ID" value="AAA51922.1"/>
    <property type="status" value="JOINED"/>
    <property type="molecule type" value="Genomic_DNA"/>
</dbReference>
<dbReference type="EMBL" id="M63137">
    <property type="protein sequence ID" value="AAA51922.1"/>
    <property type="status" value="JOINED"/>
    <property type="molecule type" value="Genomic_DNA"/>
</dbReference>
<dbReference type="EMBL" id="CR456947">
    <property type="protein sequence ID" value="CAG33228.1"/>
    <property type="molecule type" value="mRNA"/>
</dbReference>
<dbReference type="EMBL" id="BT006910">
    <property type="protein sequence ID" value="AAP35556.1"/>
    <property type="molecule type" value="mRNA"/>
</dbReference>
<dbReference type="EMBL" id="BT020155">
    <property type="protein sequence ID" value="AAV38957.1"/>
    <property type="molecule type" value="mRNA"/>
</dbReference>
<dbReference type="EMBL" id="BC016320">
    <property type="protein sequence ID" value="AAH16320.1"/>
    <property type="molecule type" value="mRNA"/>
</dbReference>
<dbReference type="EMBL" id="L12980">
    <property type="protein sequence ID" value="AAA16314.1"/>
    <property type="molecule type" value="Genomic_DNA"/>
</dbReference>
<dbReference type="EMBL" id="S74689">
    <property type="protein sequence ID" value="AAD14156.1"/>
    <property type="molecule type" value="Genomic_DNA"/>
</dbReference>
<dbReference type="EMBL" id="S52557">
    <property type="protein sequence ID" value="AAD13868.1"/>
    <property type="molecule type" value="Genomic_DNA"/>
</dbReference>
<dbReference type="CCDS" id="CCDS7725.1"/>
<dbReference type="PIR" id="A25771">
    <property type="entry name" value="KHHUD"/>
</dbReference>
<dbReference type="RefSeq" id="NP_001900.1">
    <property type="nucleotide sequence ID" value="NM_001909.5"/>
</dbReference>
<dbReference type="PDB" id="1LYA">
    <property type="method" value="X-ray"/>
    <property type="resolution" value="2.50 A"/>
    <property type="chains" value="A/C=65-161, B/D=170-410"/>
</dbReference>
<dbReference type="PDB" id="1LYB">
    <property type="method" value="X-ray"/>
    <property type="resolution" value="2.50 A"/>
    <property type="chains" value="A/C=65-161, B/D=170-410"/>
</dbReference>
<dbReference type="PDB" id="1LYW">
    <property type="method" value="X-ray"/>
    <property type="resolution" value="2.50 A"/>
    <property type="chains" value="A/C/E/G=65-161, B/D/F/H=170-410"/>
</dbReference>
<dbReference type="PDB" id="4OBZ">
    <property type="method" value="X-ray"/>
    <property type="resolution" value="2.90 A"/>
    <property type="chains" value="A/C=60-162, B/D=170-412"/>
</dbReference>
<dbReference type="PDB" id="4OC6">
    <property type="method" value="X-ray"/>
    <property type="resolution" value="2.64 A"/>
    <property type="chains" value="A=60-162, B=170-412"/>
</dbReference>
<dbReference type="PDB" id="4OD9">
    <property type="method" value="X-ray"/>
    <property type="resolution" value="1.90 A"/>
    <property type="chains" value="A/C=60-162, B/D=170-412"/>
</dbReference>
<dbReference type="PDBsum" id="1LYA"/>
<dbReference type="PDBsum" id="1LYB"/>
<dbReference type="PDBsum" id="1LYW"/>
<dbReference type="PDBsum" id="4OBZ"/>
<dbReference type="PDBsum" id="4OC6"/>
<dbReference type="PDBsum" id="4OD9"/>
<dbReference type="SMR" id="P07339"/>
<dbReference type="BioGRID" id="107889">
    <property type="interactions" value="167"/>
</dbReference>
<dbReference type="DIP" id="DIP-43906N"/>
<dbReference type="FunCoup" id="P07339">
    <property type="interactions" value="1372"/>
</dbReference>
<dbReference type="IntAct" id="P07339">
    <property type="interactions" value="79"/>
</dbReference>
<dbReference type="MINT" id="P07339"/>
<dbReference type="STRING" id="9606.ENSP00000236671"/>
<dbReference type="BindingDB" id="P07339"/>
<dbReference type="ChEMBL" id="CHEMBL2581"/>
<dbReference type="DrugBank" id="DB03028">
    <property type="generic name" value="1h-Benoximidazole-2-Carboxylic Acid"/>
</dbReference>
<dbReference type="DrugBank" id="DB03096">
    <property type="generic name" value="2-Morpholinoethylamine"/>
</dbReference>
<dbReference type="DrugBank" id="DB07542">
    <property type="generic name" value="5-Amino-6-cyclohexyl-4-hydroxy-2-isobutyl-hexanoic acid"/>
</dbReference>
<dbReference type="DrugBank" id="DB08740">
    <property type="generic name" value="CYCLOHEXYLMETHYL-2,3-DIHYDROXY-5-METHYL-HEXYLAMIDE"/>
</dbReference>
<dbReference type="DrugBank" id="DB02216">
    <property type="generic name" value="S-Methylcysteine"/>
</dbReference>
<dbReference type="DrugCentral" id="P07339"/>
<dbReference type="GuidetoPHARMACOLOGY" id="2345"/>
<dbReference type="MEROPS" id="A01.009"/>
<dbReference type="GlyConnect" id="1079">
    <property type="glycosylation" value="44 N-Linked glycans (2 sites)"/>
</dbReference>
<dbReference type="GlyCosmos" id="P07339">
    <property type="glycosylation" value="3 sites, 44 glycans"/>
</dbReference>
<dbReference type="GlyGen" id="P07339">
    <property type="glycosylation" value="12 sites, 112 N-linked glycans (2 sites), 1 N-linked;o-linked glycan (1 site), 3 O-linked glycans (7 sites)"/>
</dbReference>
<dbReference type="iPTMnet" id="P07339"/>
<dbReference type="MetOSite" id="P07339"/>
<dbReference type="PhosphoSitePlus" id="P07339"/>
<dbReference type="SwissPalm" id="P07339"/>
<dbReference type="BioMuta" id="CTSD"/>
<dbReference type="DMDM" id="115717"/>
<dbReference type="REPRODUCTION-2DPAGE" id="IPI00011229"/>
<dbReference type="CPTAC" id="CPTAC-486"/>
<dbReference type="CPTAC" id="CPTAC-487"/>
<dbReference type="CPTAC" id="CPTAC-658"/>
<dbReference type="jPOST" id="P07339"/>
<dbReference type="MassIVE" id="P07339"/>
<dbReference type="PaxDb" id="9606-ENSP00000236671"/>
<dbReference type="PeptideAtlas" id="P07339"/>
<dbReference type="ProteomicsDB" id="51994"/>
<dbReference type="Pumba" id="P07339"/>
<dbReference type="TopDownProteomics" id="P07339"/>
<dbReference type="Antibodypedia" id="880">
    <property type="antibodies" value="1180 antibodies from 47 providers"/>
</dbReference>
<dbReference type="DNASU" id="1509"/>
<dbReference type="Ensembl" id="ENST00000236671.7">
    <property type="protein sequence ID" value="ENSP00000236671.2"/>
    <property type="gene ID" value="ENSG00000117984.15"/>
</dbReference>
<dbReference type="GeneID" id="1509"/>
<dbReference type="KEGG" id="hsa:1509"/>
<dbReference type="MANE-Select" id="ENST00000236671.7">
    <property type="protein sequence ID" value="ENSP00000236671.2"/>
    <property type="RefSeq nucleotide sequence ID" value="NM_001909.5"/>
    <property type="RefSeq protein sequence ID" value="NP_001900.1"/>
</dbReference>
<dbReference type="AGR" id="HGNC:2529"/>
<dbReference type="CTD" id="1509"/>
<dbReference type="DisGeNET" id="1509"/>
<dbReference type="GeneCards" id="CTSD"/>
<dbReference type="HGNC" id="HGNC:2529">
    <property type="gene designation" value="CTSD"/>
</dbReference>
<dbReference type="HPA" id="ENSG00000117984">
    <property type="expression patterns" value="Low tissue specificity"/>
</dbReference>
<dbReference type="MalaCards" id="CTSD"/>
<dbReference type="MIM" id="116840">
    <property type="type" value="gene"/>
</dbReference>
<dbReference type="MIM" id="610127">
    <property type="type" value="phenotype"/>
</dbReference>
<dbReference type="neXtProt" id="NX_P07339"/>
<dbReference type="OpenTargets" id="ENSG00000117984"/>
<dbReference type="Orphanet" id="228337">
    <property type="disease" value="CLN10 disease"/>
</dbReference>
<dbReference type="PharmGKB" id="PA27029"/>
<dbReference type="VEuPathDB" id="HostDB:ENSG00000117984"/>
<dbReference type="eggNOG" id="KOG1339">
    <property type="taxonomic scope" value="Eukaryota"/>
</dbReference>
<dbReference type="GeneTree" id="ENSGT00940000155733"/>
<dbReference type="HOGENOM" id="CLU_013253_3_3_1"/>
<dbReference type="InParanoid" id="P07339"/>
<dbReference type="OMA" id="KYDHDAS"/>
<dbReference type="OrthoDB" id="771136at2759"/>
<dbReference type="PAN-GO" id="P07339">
    <property type="GO annotations" value="4 GO annotations based on evolutionary models"/>
</dbReference>
<dbReference type="PhylomeDB" id="P07339"/>
<dbReference type="TreeFam" id="TF314990"/>
<dbReference type="BioCyc" id="MetaCyc:HS04183-MONOMER"/>
<dbReference type="BRENDA" id="3.4.23.5">
    <property type="organism ID" value="2681"/>
</dbReference>
<dbReference type="PathwayCommons" id="P07339"/>
<dbReference type="Reactome" id="R-HSA-1442490">
    <property type="pathway name" value="Collagen degradation"/>
</dbReference>
<dbReference type="Reactome" id="R-HSA-2022377">
    <property type="pathway name" value="Metabolism of Angiotensinogen to Angiotensins"/>
</dbReference>
<dbReference type="Reactome" id="R-HSA-2132295">
    <property type="pathway name" value="MHC class II antigen presentation"/>
</dbReference>
<dbReference type="Reactome" id="R-HSA-6798695">
    <property type="pathway name" value="Neutrophil degranulation"/>
</dbReference>
<dbReference type="Reactome" id="R-HSA-77387">
    <property type="pathway name" value="Insulin receptor recycling"/>
</dbReference>
<dbReference type="Reactome" id="R-HSA-9018519">
    <property type="pathway name" value="Estrogen-dependent gene expression"/>
</dbReference>
<dbReference type="SignaLink" id="P07339"/>
<dbReference type="SIGNOR" id="P07339"/>
<dbReference type="BioGRID-ORCS" id="1509">
    <property type="hits" value="9 hits in 1161 CRISPR screens"/>
</dbReference>
<dbReference type="ChiTaRS" id="CTSD">
    <property type="organism name" value="human"/>
</dbReference>
<dbReference type="EvolutionaryTrace" id="P07339"/>
<dbReference type="GeneWiki" id="Cathepsin_D"/>
<dbReference type="GenomeRNAi" id="1509"/>
<dbReference type="Pharos" id="P07339">
    <property type="development level" value="Tchem"/>
</dbReference>
<dbReference type="PRO" id="PR:P07339"/>
<dbReference type="Proteomes" id="UP000005640">
    <property type="component" value="Chromosome 11"/>
</dbReference>
<dbReference type="RNAct" id="P07339">
    <property type="molecule type" value="protein"/>
</dbReference>
<dbReference type="Bgee" id="ENSG00000117984">
    <property type="expression patterns" value="Expressed in right adrenal gland cortex and 199 other cell types or tissues"/>
</dbReference>
<dbReference type="ExpressionAtlas" id="P07339">
    <property type="expression patterns" value="baseline and differential"/>
</dbReference>
<dbReference type="GO" id="GO:0062023">
    <property type="term" value="C:collagen-containing extracellular matrix"/>
    <property type="evidence" value="ECO:0007005"/>
    <property type="project" value="BHF-UCL"/>
</dbReference>
<dbReference type="GO" id="GO:0005829">
    <property type="term" value="C:cytosol"/>
    <property type="evidence" value="ECO:0000314"/>
    <property type="project" value="ARUK-UCL"/>
</dbReference>
<dbReference type="GO" id="GO:0031904">
    <property type="term" value="C:endosome lumen"/>
    <property type="evidence" value="ECO:0007669"/>
    <property type="project" value="Ensembl"/>
</dbReference>
<dbReference type="GO" id="GO:0010008">
    <property type="term" value="C:endosome membrane"/>
    <property type="evidence" value="ECO:0000314"/>
    <property type="project" value="ARUK-UCL"/>
</dbReference>
<dbReference type="GO" id="GO:0070062">
    <property type="term" value="C:extracellular exosome"/>
    <property type="evidence" value="ECO:0007005"/>
    <property type="project" value="UniProtKB"/>
</dbReference>
<dbReference type="GO" id="GO:0005576">
    <property type="term" value="C:extracellular region"/>
    <property type="evidence" value="ECO:0007005"/>
    <property type="project" value="BHF-UCL"/>
</dbReference>
<dbReference type="GO" id="GO:0005615">
    <property type="term" value="C:extracellular space"/>
    <property type="evidence" value="ECO:0007005"/>
    <property type="project" value="UniProtKB"/>
</dbReference>
<dbReference type="GO" id="GO:1904813">
    <property type="term" value="C:ficolin-1-rich granule lumen"/>
    <property type="evidence" value="ECO:0000304"/>
    <property type="project" value="Reactome"/>
</dbReference>
<dbReference type="GO" id="GO:0043202">
    <property type="term" value="C:lysosomal lumen"/>
    <property type="evidence" value="ECO:0000304"/>
    <property type="project" value="Reactome"/>
</dbReference>
<dbReference type="GO" id="GO:0005765">
    <property type="term" value="C:lysosomal membrane"/>
    <property type="evidence" value="ECO:0000314"/>
    <property type="project" value="ARUK-UCL"/>
</dbReference>
<dbReference type="GO" id="GO:0005764">
    <property type="term" value="C:lysosome"/>
    <property type="evidence" value="ECO:0000314"/>
    <property type="project" value="UniProtKB"/>
</dbReference>
<dbReference type="GO" id="GO:0042470">
    <property type="term" value="C:melanosome"/>
    <property type="evidence" value="ECO:0007669"/>
    <property type="project" value="UniProtKB-SubCell"/>
</dbReference>
<dbReference type="GO" id="GO:0045121">
    <property type="term" value="C:membrane raft"/>
    <property type="evidence" value="ECO:0000314"/>
    <property type="project" value="UniProtKB"/>
</dbReference>
<dbReference type="GO" id="GO:0035580">
    <property type="term" value="C:specific granule lumen"/>
    <property type="evidence" value="ECO:0000304"/>
    <property type="project" value="Reactome"/>
</dbReference>
<dbReference type="GO" id="GO:1904724">
    <property type="term" value="C:tertiary granule lumen"/>
    <property type="evidence" value="ECO:0000304"/>
    <property type="project" value="Reactome"/>
</dbReference>
<dbReference type="GO" id="GO:0004190">
    <property type="term" value="F:aspartic-type endopeptidase activity"/>
    <property type="evidence" value="ECO:0000318"/>
    <property type="project" value="GO_Central"/>
</dbReference>
<dbReference type="GO" id="GO:0070001">
    <property type="term" value="F:aspartic-type peptidase activity"/>
    <property type="evidence" value="ECO:0000250"/>
    <property type="project" value="ARUK-UCL"/>
</dbReference>
<dbReference type="GO" id="GO:0004197">
    <property type="term" value="F:cysteine-type endopeptidase activity"/>
    <property type="evidence" value="ECO:0000304"/>
    <property type="project" value="Reactome"/>
</dbReference>
<dbReference type="GO" id="GO:0008233">
    <property type="term" value="F:peptidase activity"/>
    <property type="evidence" value="ECO:0000314"/>
    <property type="project" value="ARUK-UCL"/>
</dbReference>
<dbReference type="GO" id="GO:0019886">
    <property type="term" value="P:antigen processing and presentation of exogenous peptide antigen via MHC class II"/>
    <property type="evidence" value="ECO:0000304"/>
    <property type="project" value="Reactome"/>
</dbReference>
<dbReference type="GO" id="GO:0000045">
    <property type="term" value="P:autophagosome assembly"/>
    <property type="evidence" value="ECO:0007669"/>
    <property type="project" value="Ensembl"/>
</dbReference>
<dbReference type="GO" id="GO:0097194">
    <property type="term" value="P:execution phase of apoptosis"/>
    <property type="evidence" value="ECO:0000314"/>
    <property type="project" value="ARUK-UCL"/>
</dbReference>
<dbReference type="GO" id="GO:1901143">
    <property type="term" value="P:insulin catabolic process"/>
    <property type="evidence" value="ECO:0007669"/>
    <property type="project" value="Ensembl"/>
</dbReference>
<dbReference type="GO" id="GO:0038020">
    <property type="term" value="P:insulin receptor recycling"/>
    <property type="evidence" value="ECO:0007669"/>
    <property type="project" value="Ensembl"/>
</dbReference>
<dbReference type="GO" id="GO:0042159">
    <property type="term" value="P:lipoprotein catabolic process"/>
    <property type="evidence" value="ECO:0000314"/>
    <property type="project" value="ARUK-UCL"/>
</dbReference>
<dbReference type="GO" id="GO:0043065">
    <property type="term" value="P:positive regulation of apoptotic process"/>
    <property type="evidence" value="ECO:0000314"/>
    <property type="project" value="ARUK-UCL"/>
</dbReference>
<dbReference type="GO" id="GO:0006508">
    <property type="term" value="P:proteolysis"/>
    <property type="evidence" value="ECO:0000314"/>
    <property type="project" value="ARUK-UCL"/>
</dbReference>
<dbReference type="GO" id="GO:0070201">
    <property type="term" value="P:regulation of establishment of protein localization"/>
    <property type="evidence" value="ECO:0000314"/>
    <property type="project" value="ARUK-UCL"/>
</dbReference>
<dbReference type="CDD" id="cd05490">
    <property type="entry name" value="Cathepsin_D2"/>
    <property type="match status" value="1"/>
</dbReference>
<dbReference type="FunFam" id="2.40.70.10:FF:000039">
    <property type="entry name" value="Cathepsin D preproprotein"/>
    <property type="match status" value="1"/>
</dbReference>
<dbReference type="FunFam" id="2.40.70.10:FF:000047">
    <property type="entry name" value="Cathepsin D preproprotein"/>
    <property type="match status" value="1"/>
</dbReference>
<dbReference type="Gene3D" id="2.40.70.10">
    <property type="entry name" value="Acid Proteases"/>
    <property type="match status" value="2"/>
</dbReference>
<dbReference type="InterPro" id="IPR001461">
    <property type="entry name" value="Aspartic_peptidase_A1"/>
</dbReference>
<dbReference type="InterPro" id="IPR001969">
    <property type="entry name" value="Aspartic_peptidase_AS"/>
</dbReference>
<dbReference type="InterPro" id="IPR012848">
    <property type="entry name" value="Aspartic_peptidase_N"/>
</dbReference>
<dbReference type="InterPro" id="IPR033144">
    <property type="entry name" value="Cathepsin_D"/>
</dbReference>
<dbReference type="InterPro" id="IPR033121">
    <property type="entry name" value="PEPTIDASE_A1"/>
</dbReference>
<dbReference type="InterPro" id="IPR021109">
    <property type="entry name" value="Peptidase_aspartic_dom_sf"/>
</dbReference>
<dbReference type="PANTHER" id="PTHR47966">
    <property type="entry name" value="BETA-SITE APP-CLEAVING ENZYME, ISOFORM A-RELATED"/>
    <property type="match status" value="1"/>
</dbReference>
<dbReference type="PANTHER" id="PTHR47966:SF42">
    <property type="entry name" value="CATHEPSIN D"/>
    <property type="match status" value="1"/>
</dbReference>
<dbReference type="Pfam" id="PF07966">
    <property type="entry name" value="A1_Propeptide"/>
    <property type="match status" value="1"/>
</dbReference>
<dbReference type="Pfam" id="PF00026">
    <property type="entry name" value="Asp"/>
    <property type="match status" value="1"/>
</dbReference>
<dbReference type="PRINTS" id="PR00792">
    <property type="entry name" value="PEPSIN"/>
</dbReference>
<dbReference type="SUPFAM" id="SSF50630">
    <property type="entry name" value="Acid proteases"/>
    <property type="match status" value="1"/>
</dbReference>
<dbReference type="PROSITE" id="PS00141">
    <property type="entry name" value="ASP_PROTEASE"/>
    <property type="match status" value="2"/>
</dbReference>
<dbReference type="PROSITE" id="PS51767">
    <property type="entry name" value="PEPTIDASE_A1"/>
    <property type="match status" value="1"/>
</dbReference>
<reference key="1">
    <citation type="journal article" date="1985" name="Proc. Natl. Acad. Sci. U.S.A.">
        <title>Cloning and sequence analysis of cDNA for human cathepsin D.</title>
        <authorList>
            <person name="Faust P.L."/>
            <person name="Kornfeld S."/>
            <person name="Chirgwin J.M."/>
        </authorList>
    </citation>
    <scope>NUCLEOTIDE SEQUENCE [MRNA]</scope>
</reference>
<reference key="2">
    <citation type="journal article" date="1987" name="Nucleic Acids Res.">
        <title>Oestrogen regulates cathepsin D mRNA levels in oestrogen responsive human breast cancer cells.</title>
        <authorList>
            <person name="Westley B.R."/>
            <person name="May F.E.B."/>
        </authorList>
    </citation>
    <scope>NUCLEOTIDE SEQUENCE [MRNA]</scope>
</reference>
<reference key="3">
    <citation type="journal article" date="1991" name="DNA Cell Biol.">
        <title>Molecular organization of the human cathepsin D gene.</title>
        <authorList>
            <person name="Redecker B."/>
            <person name="Heckendorf B."/>
            <person name="Grosch H.W."/>
            <person name="Mersmann G."/>
            <person name="Hasilik A."/>
        </authorList>
    </citation>
    <scope>NUCLEOTIDE SEQUENCE [GENOMIC DNA]</scope>
</reference>
<reference key="4">
    <citation type="submission" date="2004-06" db="EMBL/GenBank/DDBJ databases">
        <title>Cloning of human full open reading frames in Gateway(TM) system entry vector (pDONR201).</title>
        <authorList>
            <person name="Ebert L."/>
            <person name="Schick M."/>
            <person name="Neubert P."/>
            <person name="Schatten R."/>
            <person name="Henze S."/>
            <person name="Korn B."/>
        </authorList>
    </citation>
    <scope>NUCLEOTIDE SEQUENCE [LARGE SCALE MRNA]</scope>
</reference>
<reference key="5">
    <citation type="submission" date="2004-10" db="EMBL/GenBank/DDBJ databases">
        <title>Cloning of human full-length CDSs in BD Creator(TM) system donor vector.</title>
        <authorList>
            <person name="Kalnine N."/>
            <person name="Chen X."/>
            <person name="Rolfs A."/>
            <person name="Halleck A."/>
            <person name="Hines L."/>
            <person name="Eisenstein S."/>
            <person name="Koundinya M."/>
            <person name="Raphael J."/>
            <person name="Moreira D."/>
            <person name="Kelley T."/>
            <person name="LaBaer J."/>
            <person name="Lin Y."/>
            <person name="Phelan M."/>
            <person name="Farmer A."/>
        </authorList>
    </citation>
    <scope>NUCLEOTIDE SEQUENCE [LARGE SCALE MRNA]</scope>
</reference>
<reference key="6">
    <citation type="journal article" date="2004" name="Genome Res.">
        <title>The status, quality, and expansion of the NIH full-length cDNA project: the Mammalian Gene Collection (MGC).</title>
        <authorList>
            <consortium name="The MGC Project Team"/>
        </authorList>
    </citation>
    <scope>NUCLEOTIDE SEQUENCE [LARGE SCALE MRNA]</scope>
    <source>
        <tissue>Kidney</tissue>
    </source>
</reference>
<reference key="7">
    <citation type="journal article" date="1993" name="Gene">
        <title>The human cathepsin D-encoding gene is transcribed from an estrogen-regulated and a constitutive start point.</title>
        <authorList>
            <person name="May F.E."/>
            <person name="Smith D.J."/>
            <person name="Westley B.R."/>
        </authorList>
    </citation>
    <scope>NUCLEOTIDE SEQUENCE [GENOMIC DNA] OF 1-22</scope>
</reference>
<reference key="8">
    <citation type="journal article" date="1994" name="Mol. Endocrinol.">
        <title>Characterization of the proximal estrogen-responsive element of human cathepsin D gene.</title>
        <authorList>
            <person name="Augereau P."/>
            <person name="Miralles F."/>
            <person name="Cavailles V."/>
            <person name="Gaudelet C."/>
            <person name="Parker M."/>
            <person name="Rochefort H."/>
        </authorList>
    </citation>
    <scope>NUCLEOTIDE SEQUENCE [GENOMIC DNA] OF 1-22</scope>
</reference>
<reference key="9">
    <citation type="submission" date="1992-06" db="UniProtKB">
        <authorList>
            <person name="Hochstrasser D.F."/>
            <person name="Frutiger S."/>
            <person name="Paquet N."/>
            <person name="Bairoch A."/>
            <person name="Ravier F."/>
            <person name="Pasquali C."/>
            <person name="Sanchez J.-C."/>
            <person name="Tissot J.-D."/>
            <person name="Bjellqvist B."/>
            <person name="Vargas R."/>
            <person name="Appel R.D."/>
            <person name="Hughes G.J."/>
        </authorList>
    </citation>
    <scope>PROTEIN SEQUENCE OF 170-180</scope>
    <source>
        <tissue>Liver</tissue>
    </source>
</reference>
<reference key="10">
    <citation type="journal article" date="1992" name="Int. J. Biochem.">
        <title>Proteolytic processing sites producing the mature form of human cathepsin D.</title>
        <authorList>
            <person name="Kobayashi T."/>
            <person name="Honke K."/>
            <person name="Gasa S."/>
            <person name="Fujii T."/>
            <person name="Maguchi S."/>
            <person name="Miyazaki T."/>
            <person name="Makita A."/>
        </authorList>
    </citation>
    <scope>PROTEIN SEQUENCE OF 154-162 AND 169-180</scope>
    <scope>SUBUNIT</scope>
    <scope>TISSUE SPECIFICITY</scope>
</reference>
<reference key="11">
    <citation type="journal article" date="2003" name="J. Proteome Res.">
        <title>Proteomic analysis of early melanosomes: identification of novel melanosomal proteins.</title>
        <authorList>
            <person name="Basrur V."/>
            <person name="Yang F."/>
            <person name="Kushimoto T."/>
            <person name="Higashimoto Y."/>
            <person name="Yasumoto K."/>
            <person name="Valencia J."/>
            <person name="Muller J."/>
            <person name="Vieira W.D."/>
            <person name="Watabe H."/>
            <person name="Shabanowitz J."/>
            <person name="Hearing V.J."/>
            <person name="Hunt D.F."/>
            <person name="Appella E."/>
        </authorList>
    </citation>
    <scope>SUBCELLULAR LOCATION [LARGE SCALE ANALYSIS]</scope>
    <source>
        <tissue>Melanoma</tissue>
    </source>
</reference>
<reference key="12">
    <citation type="journal article" date="2003" name="Nat. Biotechnol.">
        <title>Identification and quantification of N-linked glycoproteins using hydrazide chemistry, stable isotope labeling and mass spectrometry.</title>
        <authorList>
            <person name="Zhang H."/>
            <person name="Li X.-J."/>
            <person name="Martin D.B."/>
            <person name="Aebersold R."/>
        </authorList>
    </citation>
    <scope>GLYCOSYLATION AT ASN-263</scope>
</reference>
<reference key="13">
    <citation type="journal article" date="2005" name="J. Proteome Res.">
        <title>Human plasma N-glycoproteome analysis by immunoaffinity subtraction, hydrazide chemistry, and mass spectrometry.</title>
        <authorList>
            <person name="Liu T."/>
            <person name="Qian W.-J."/>
            <person name="Gritsenko M.A."/>
            <person name="Camp D.G. II"/>
            <person name="Monroe M.E."/>
            <person name="Moore R.J."/>
            <person name="Smith R.D."/>
        </authorList>
    </citation>
    <scope>GLYCOSYLATION [LARGE SCALE ANALYSIS] AT ASN-263</scope>
    <source>
        <tissue>Plasma</tissue>
    </source>
</reference>
<reference key="14">
    <citation type="journal article" date="2006" name="Brain">
        <title>Cathepsin D deficiency underlies congenital human neuronal ceroid-lipofuscinosis.</title>
        <authorList>
            <person name="Siintola E."/>
            <person name="Partanen S."/>
            <person name="Stromme P."/>
            <person name="Haapanen A."/>
            <person name="Haltia M."/>
            <person name="Maehlen J."/>
            <person name="Lehesjoki A.E."/>
            <person name="Tyynela J."/>
        </authorList>
    </citation>
    <scope>INVOLVEMENT IN CLN10</scope>
    <scope>VARIANT ARG-282</scope>
</reference>
<reference key="15">
    <citation type="journal article" date="2006" name="J. Proteome Res.">
        <title>Proteomic and bioinformatic characterization of the biogenesis and function of melanosomes.</title>
        <authorList>
            <person name="Chi A."/>
            <person name="Valencia J.C."/>
            <person name="Hu Z.-Z."/>
            <person name="Watabe H."/>
            <person name="Yamaguchi H."/>
            <person name="Mangini N.J."/>
            <person name="Huang H."/>
            <person name="Canfield V.A."/>
            <person name="Cheng K.C."/>
            <person name="Yang F."/>
            <person name="Abe R."/>
            <person name="Yamagishi S."/>
            <person name="Shabanowitz J."/>
            <person name="Hearing V.J."/>
            <person name="Wu C."/>
            <person name="Appella E."/>
            <person name="Hunt D.F."/>
        </authorList>
    </citation>
    <scope>SUBCELLULAR LOCATION [LARGE SCALE ANALYSIS]</scope>
    <source>
        <tissue>Melanoma</tissue>
    </source>
</reference>
<reference key="16">
    <citation type="journal article" date="2006" name="Mol. Cell. Proteomics">
        <title>Elucidation of N-glycosylation sites on human platelet proteins: a glycoproteomic approach.</title>
        <authorList>
            <person name="Lewandrowski U."/>
            <person name="Moebius J."/>
            <person name="Walter U."/>
            <person name="Sickmann A."/>
        </authorList>
    </citation>
    <scope>GLYCOSYLATION [LARGE SCALE ANALYSIS] AT ASN-263</scope>
    <source>
        <tissue>Platelet</tissue>
    </source>
</reference>
<reference key="17">
    <citation type="journal article" date="2009" name="J. Proteome Res.">
        <title>Glycoproteomics analysis of human liver tissue by combination of multiple enzyme digestion and hydrazide chemistry.</title>
        <authorList>
            <person name="Chen R."/>
            <person name="Jiang X."/>
            <person name="Sun D."/>
            <person name="Han G."/>
            <person name="Wang F."/>
            <person name="Ye M."/>
            <person name="Wang L."/>
            <person name="Zou H."/>
        </authorList>
    </citation>
    <scope>GLYCOSYLATION [LARGE SCALE ANALYSIS] AT ASN-134 AND ASN-263</scope>
    <source>
        <tissue>Liver</tissue>
    </source>
</reference>
<reference key="18">
    <citation type="journal article" date="2010" name="Mol. Cell. Proteomics">
        <title>Proteomics characterization of extracellular space components in the human aorta.</title>
        <authorList>
            <person name="Didangelos A."/>
            <person name="Yin X."/>
            <person name="Mandal K."/>
            <person name="Baumert M."/>
            <person name="Jahangiri M."/>
            <person name="Mayr M."/>
        </authorList>
    </citation>
    <scope>TISSUE SPECIFICITY</scope>
    <scope>SUBCELLULAR LOCATION</scope>
</reference>
<reference key="19">
    <citation type="journal article" date="2011" name="BMC Syst. Biol.">
        <title>Initial characterization of the human central proteome.</title>
        <authorList>
            <person name="Burkard T.R."/>
            <person name="Planyavsky M."/>
            <person name="Kaupe I."/>
            <person name="Breitwieser F.P."/>
            <person name="Buerckstuemmer T."/>
            <person name="Bennett K.L."/>
            <person name="Superti-Furga G."/>
            <person name="Colinge J."/>
        </authorList>
    </citation>
    <scope>IDENTIFICATION BY MASS SPECTROMETRY [LARGE SCALE ANALYSIS]</scope>
</reference>
<reference key="20">
    <citation type="journal article" date="2013" name="J. Proteome Res.">
        <title>LC-MS/MS characterization of O-glycosylation sites and glycan structures of human cerebrospinal fluid glycoproteins.</title>
        <authorList>
            <person name="Halim A."/>
            <person name="Ruetschi U."/>
            <person name="Larson G."/>
            <person name="Nilsson J."/>
        </authorList>
    </citation>
    <scope>GLYCOSYLATION AT THR-63</scope>
    <scope>IDENTIFICATION BY MASS SPECTROMETRY</scope>
</reference>
<reference key="21">
    <citation type="journal article" date="2015" name="Proteomics">
        <title>N-terminome analysis of the human mitochondrial proteome.</title>
        <authorList>
            <person name="Vaca Jacome A.S."/>
            <person name="Rabilloud T."/>
            <person name="Schaeffer-Reiss C."/>
            <person name="Rompais M."/>
            <person name="Ayoub D."/>
            <person name="Lane L."/>
            <person name="Bairoch A."/>
            <person name="Van Dorsselaer A."/>
            <person name="Carapito C."/>
        </authorList>
    </citation>
    <scope>IDENTIFICATION BY MASS SPECTROMETRY [LARGE SCALE ANALYSIS]</scope>
</reference>
<reference key="22">
    <citation type="journal article" date="2016" name="EBioMedicine">
        <title>ADAM30 Downregulates APP-Linked Defects Through Cathepsin D Activation in Alzheimer's Disease.</title>
        <authorList>
            <person name="Letronne F."/>
            <person name="Laumet G."/>
            <person name="Ayral A.M."/>
            <person name="Chapuis J."/>
            <person name="Demiautte F."/>
            <person name="Laga M."/>
            <person name="Vandenberghe M.E."/>
            <person name="Malmanche N."/>
            <person name="Leroux F."/>
            <person name="Eysert F."/>
            <person name="Sottejeau Y."/>
            <person name="Chami L."/>
            <person name="Flaig A."/>
            <person name="Bauer C."/>
            <person name="Dourlen P."/>
            <person name="Lesaffre M."/>
            <person name="Delay C."/>
            <person name="Huot L."/>
            <person name="Dumont J."/>
            <person name="Werkmeister E."/>
            <person name="Lafont F."/>
            <person name="Mendes T."/>
            <person name="Hansmannel F."/>
            <person name="Dermaut B."/>
            <person name="Deprez B."/>
            <person name="Herard A.S."/>
            <person name="Dhenain M."/>
            <person name="Souedet N."/>
            <person name="Pasquier F."/>
            <person name="Tulasne D."/>
            <person name="Berr C."/>
            <person name="Hauw J.J."/>
            <person name="Lemoine Y."/>
            <person name="Amouyel P."/>
            <person name="Mann D."/>
            <person name="Deprez R."/>
            <person name="Checler F."/>
            <person name="Hot D."/>
            <person name="Delzescaux T."/>
            <person name="Gevaert K."/>
            <person name="Lambert J.C."/>
        </authorList>
    </citation>
    <scope>INTERACTION WITH ADAM30</scope>
    <scope>IDENTIFICATION BY MASS SPECTROMETRY</scope>
    <scope>CLEAVAGE</scope>
</reference>
<reference key="23">
    <citation type="journal article" date="1993" name="EMBO J.">
        <title>Two crystal structures for cathepsin D: the lysosomal targeting signal and active site.</title>
        <authorList>
            <person name="Metcalf P."/>
            <person name="Fusek M."/>
        </authorList>
    </citation>
    <scope>X-RAY CRYSTALLOGRAPHY (3 ANGSTROMS)</scope>
    <source>
        <tissue>Spleen</tissue>
    </source>
</reference>
<reference key="24">
    <citation type="journal article" date="1993" name="Proc. Natl. Acad. Sci. U.S.A.">
        <title>Crystal structures of native and inhibited forms of human cathepsin D: implications for lysosomal targeting and drug design.</title>
        <authorList>
            <person name="Baldwin E.T."/>
            <person name="Bhat T.N."/>
            <person name="Gulnik S."/>
            <person name="Hosur M.V."/>
            <person name="Sowder R.C. II"/>
            <person name="Cachau R.E."/>
            <person name="Collins J."/>
            <person name="Silva A.M."/>
            <person name="Erickson J.W."/>
        </authorList>
    </citation>
    <scope>X-RAY CRYSTALLOGRAPHY (2.5 ANGSTROMS)</scope>
    <scope>SUBUNIT</scope>
    <source>
        <tissue>Liver</tissue>
    </source>
</reference>
<reference key="25">
    <citation type="journal article" date="2000" name="Ann. Neurol.">
        <title>A genetic variation of cathepsin D is a major risk factor for Alzheimer's disease.</title>
        <authorList>
            <person name="Papassotiropoulos A."/>
            <person name="Bagli M."/>
            <person name="Kurz A."/>
            <person name="Kornhuber J."/>
            <person name="Forstl H."/>
            <person name="Maier W."/>
            <person name="Pauls J."/>
            <person name="Lautenschlager N."/>
            <person name="Heun R."/>
        </authorList>
    </citation>
    <scope>VARIANT VAL-58</scope>
</reference>
<reference key="26">
    <citation type="journal article" date="2006" name="Am. J. Hum. Genet.">
        <title>Cathepsin D deficiency is associated with a human neurodegenerative disorder.</title>
        <authorList>
            <person name="Steinfeld R."/>
            <person name="Reinhardt K."/>
            <person name="Schreiber K."/>
            <person name="Hillebrand M."/>
            <person name="Kraetzner R."/>
            <person name="Bruck W."/>
            <person name="Saftig P."/>
            <person name="Gartner J."/>
        </authorList>
    </citation>
    <scope>VARIANTS CLN10 ILE-229 AND CYS-383</scope>
</reference>
<reference key="27">
    <citation type="journal article" date="2012" name="Hum. Mutat.">
        <title>Update of the mutation spectrum and clinical correlations of over 360 mutations in eight genes that underlie the neuronal ceroid lipofuscinoses.</title>
        <authorList>
            <person name="Kousi M."/>
            <person name="Lehesjoki A.E."/>
            <person name="Mole S.E."/>
        </authorList>
    </citation>
    <scope>VARIANT CLN10 ILE-229</scope>
</reference>